<gene>
    <name evidence="1" type="primary">atpB</name>
    <name type="ordered locus">Tneu_0209</name>
</gene>
<name>AATB_PYRNV</name>
<protein>
    <recommendedName>
        <fullName evidence="1">A-type ATP synthase subunit B</fullName>
    </recommendedName>
</protein>
<evidence type="ECO:0000255" key="1">
    <source>
        <dbReference type="HAMAP-Rule" id="MF_00310"/>
    </source>
</evidence>
<evidence type="ECO:0000256" key="2">
    <source>
        <dbReference type="SAM" id="MobiDB-lite"/>
    </source>
</evidence>
<dbReference type="EMBL" id="CP001014">
    <property type="protein sequence ID" value="ACB39164.1"/>
    <property type="molecule type" value="Genomic_DNA"/>
</dbReference>
<dbReference type="RefSeq" id="WP_012349585.1">
    <property type="nucleotide sequence ID" value="NC_010525.1"/>
</dbReference>
<dbReference type="SMR" id="B1YAT5"/>
<dbReference type="STRING" id="444157.Tneu_0209"/>
<dbReference type="GeneID" id="6165070"/>
<dbReference type="KEGG" id="tne:Tneu_0209"/>
<dbReference type="eggNOG" id="arCOG00865">
    <property type="taxonomic scope" value="Archaea"/>
</dbReference>
<dbReference type="HOGENOM" id="CLU_022916_0_0_2"/>
<dbReference type="OrthoDB" id="32941at2157"/>
<dbReference type="Proteomes" id="UP000001694">
    <property type="component" value="Chromosome"/>
</dbReference>
<dbReference type="GO" id="GO:0005886">
    <property type="term" value="C:plasma membrane"/>
    <property type="evidence" value="ECO:0007669"/>
    <property type="project" value="UniProtKB-SubCell"/>
</dbReference>
<dbReference type="GO" id="GO:0005524">
    <property type="term" value="F:ATP binding"/>
    <property type="evidence" value="ECO:0007669"/>
    <property type="project" value="UniProtKB-UniRule"/>
</dbReference>
<dbReference type="GO" id="GO:0046933">
    <property type="term" value="F:proton-transporting ATP synthase activity, rotational mechanism"/>
    <property type="evidence" value="ECO:0007669"/>
    <property type="project" value="UniProtKB-UniRule"/>
</dbReference>
<dbReference type="GO" id="GO:0046961">
    <property type="term" value="F:proton-transporting ATPase activity, rotational mechanism"/>
    <property type="evidence" value="ECO:0007669"/>
    <property type="project" value="TreeGrafter"/>
</dbReference>
<dbReference type="GO" id="GO:0042777">
    <property type="term" value="P:proton motive force-driven plasma membrane ATP synthesis"/>
    <property type="evidence" value="ECO:0007669"/>
    <property type="project" value="UniProtKB-UniRule"/>
</dbReference>
<dbReference type="CDD" id="cd18112">
    <property type="entry name" value="ATP-synt_V_A-type_beta_C"/>
    <property type="match status" value="1"/>
</dbReference>
<dbReference type="CDD" id="cd18118">
    <property type="entry name" value="ATP-synt_V_A-type_beta_N"/>
    <property type="match status" value="1"/>
</dbReference>
<dbReference type="CDD" id="cd01135">
    <property type="entry name" value="V_A-ATPase_B"/>
    <property type="match status" value="1"/>
</dbReference>
<dbReference type="Gene3D" id="3.40.50.12240">
    <property type="match status" value="1"/>
</dbReference>
<dbReference type="HAMAP" id="MF_00310">
    <property type="entry name" value="ATP_synth_B_arch"/>
    <property type="match status" value="1"/>
</dbReference>
<dbReference type="InterPro" id="IPR055190">
    <property type="entry name" value="ATP-synt_VA_C"/>
</dbReference>
<dbReference type="InterPro" id="IPR004100">
    <property type="entry name" value="ATPase_F1/V1/A1_a/bsu_N"/>
</dbReference>
<dbReference type="InterPro" id="IPR000194">
    <property type="entry name" value="ATPase_F1/V1/A1_a/bsu_nucl-bd"/>
</dbReference>
<dbReference type="InterPro" id="IPR027417">
    <property type="entry name" value="P-loop_NTPase"/>
</dbReference>
<dbReference type="InterPro" id="IPR022879">
    <property type="entry name" value="V-ATPase_su_B/beta"/>
</dbReference>
<dbReference type="NCBIfam" id="NF003235">
    <property type="entry name" value="PRK04196.1"/>
    <property type="match status" value="1"/>
</dbReference>
<dbReference type="PANTHER" id="PTHR43389">
    <property type="entry name" value="V-TYPE PROTON ATPASE SUBUNIT B"/>
    <property type="match status" value="1"/>
</dbReference>
<dbReference type="PANTHER" id="PTHR43389:SF4">
    <property type="entry name" value="V-TYPE PROTON ATPASE SUBUNIT B"/>
    <property type="match status" value="1"/>
</dbReference>
<dbReference type="Pfam" id="PF00006">
    <property type="entry name" value="ATP-synt_ab"/>
    <property type="match status" value="1"/>
</dbReference>
<dbReference type="Pfam" id="PF02874">
    <property type="entry name" value="ATP-synt_ab_N"/>
    <property type="match status" value="1"/>
</dbReference>
<dbReference type="Pfam" id="PF22919">
    <property type="entry name" value="ATP-synt_VA_C"/>
    <property type="match status" value="1"/>
</dbReference>
<dbReference type="SUPFAM" id="SSF52540">
    <property type="entry name" value="P-loop containing nucleoside triphosphate hydrolases"/>
    <property type="match status" value="1"/>
</dbReference>
<proteinExistence type="inferred from homology"/>
<keyword id="KW-0066">ATP synthesis</keyword>
<keyword id="KW-1003">Cell membrane</keyword>
<keyword id="KW-0375">Hydrogen ion transport</keyword>
<keyword id="KW-0406">Ion transport</keyword>
<keyword id="KW-0472">Membrane</keyword>
<keyword id="KW-0813">Transport</keyword>
<sequence length="467" mass="52111">MLTPVVSYSTVKEVKGPLLVIERTRGVAYGEIGEVVGPDGEPRRVQVIEVGTDYAVAQVLGGTLGLPAKGSTVRFYGKTLKLPVSEELIGRILDGKGQPRDHMPLPPPEDFRDVNGEPLNPYSREYPEEPIETGISAIDGLYTLVRGQKLPIFSGTGLPHNLMAAQVVRQSTVRGSEEGFAVVFVGVGIKTEEAIFFMDEFRKTGALRRAVAVLNLASDPVAERILAPRVGLTIAEYLAWQLGYHVLVVITDMTNYCEGLRELSSGRGELPGRRGYPGYMYTDLATIYERAGKARGKKGSVTQFPILTMPHDDITHPIPDLTGYITEGQLVLSRSMWGKGIYPPFDVIMSLSRLAKDAIGEGKTREDHKDVANTLISAYSKALELRNLATLVGERNLGWRERRYLRFADAFEQRFIKQGYYERRSFEETLDIGWDVMSILPEDELTNARPQITQKFYRRHIFESIKL</sequence>
<accession>B1YAT5</accession>
<reference key="1">
    <citation type="submission" date="2008-03" db="EMBL/GenBank/DDBJ databases">
        <title>Complete sequence of Thermoproteus neutrophilus V24Sta.</title>
        <authorList>
            <consortium name="US DOE Joint Genome Institute"/>
            <person name="Copeland A."/>
            <person name="Lucas S."/>
            <person name="Lapidus A."/>
            <person name="Glavina del Rio T."/>
            <person name="Dalin E."/>
            <person name="Tice H."/>
            <person name="Bruce D."/>
            <person name="Goodwin L."/>
            <person name="Pitluck S."/>
            <person name="Sims D."/>
            <person name="Brettin T."/>
            <person name="Detter J.C."/>
            <person name="Han C."/>
            <person name="Kuske C.R."/>
            <person name="Schmutz J."/>
            <person name="Larimer F."/>
            <person name="Land M."/>
            <person name="Hauser L."/>
            <person name="Kyrpides N."/>
            <person name="Mikhailova N."/>
            <person name="Biddle J.F."/>
            <person name="Zhang Z."/>
            <person name="Fitz-Gibbon S.T."/>
            <person name="Lowe T.M."/>
            <person name="Saltikov C."/>
            <person name="House C.H."/>
            <person name="Richardson P."/>
        </authorList>
    </citation>
    <scope>NUCLEOTIDE SEQUENCE [LARGE SCALE GENOMIC DNA]</scope>
    <source>
        <strain>DSM 2338 / JCM 9278 / NBRC 100436 / V24Sta</strain>
    </source>
</reference>
<comment type="function">
    <text evidence="1">Component of the A-type ATP synthase that produces ATP from ADP in the presence of a proton gradient across the membrane. The B chain is a regulatory subunit.</text>
</comment>
<comment type="subunit">
    <text evidence="1">Has multiple subunits with at least A(3), B(3), C, D, E, F, H, I and proteolipid K(x).</text>
</comment>
<comment type="subcellular location">
    <subcellularLocation>
        <location evidence="1">Cell membrane</location>
        <topology evidence="1">Peripheral membrane protein</topology>
    </subcellularLocation>
</comment>
<comment type="similarity">
    <text evidence="1">Belongs to the ATPase alpha/beta chains family.</text>
</comment>
<feature type="chain" id="PRO_1000115667" description="A-type ATP synthase subunit B">
    <location>
        <begin position="1"/>
        <end position="467"/>
    </location>
</feature>
<feature type="region of interest" description="Disordered" evidence="2">
    <location>
        <begin position="95"/>
        <end position="114"/>
    </location>
</feature>
<organism>
    <name type="scientific">Pyrobaculum neutrophilum (strain DSM 2338 / JCM 9278 / NBRC 100436 / V24Sta)</name>
    <name type="common">Thermoproteus neutrophilus</name>
    <dbReference type="NCBI Taxonomy" id="444157"/>
    <lineage>
        <taxon>Archaea</taxon>
        <taxon>Thermoproteota</taxon>
        <taxon>Thermoprotei</taxon>
        <taxon>Thermoproteales</taxon>
        <taxon>Thermoproteaceae</taxon>
        <taxon>Pyrobaculum</taxon>
    </lineage>
</organism>